<gene>
    <name evidence="1" type="primary">nei</name>
    <name type="ordered locus">UTI89_C0712</name>
</gene>
<protein>
    <recommendedName>
        <fullName evidence="1">Endonuclease 8</fullName>
    </recommendedName>
    <alternativeName>
        <fullName evidence="1">DNA glycosylase/AP lyase Nei</fullName>
        <ecNumber evidence="1">3.2.2.-</ecNumber>
        <ecNumber evidence="1">4.2.99.18</ecNumber>
    </alternativeName>
    <alternativeName>
        <fullName evidence="1">DNA-(apurinic or apyrimidinic site) lyase Nei</fullName>
    </alternativeName>
    <alternativeName>
        <fullName evidence="1">Endonuclease VIII</fullName>
    </alternativeName>
</protein>
<evidence type="ECO:0000255" key="1">
    <source>
        <dbReference type="HAMAP-Rule" id="MF_01253"/>
    </source>
</evidence>
<organism>
    <name type="scientific">Escherichia coli (strain UTI89 / UPEC)</name>
    <dbReference type="NCBI Taxonomy" id="364106"/>
    <lineage>
        <taxon>Bacteria</taxon>
        <taxon>Pseudomonadati</taxon>
        <taxon>Pseudomonadota</taxon>
        <taxon>Gammaproteobacteria</taxon>
        <taxon>Enterobacterales</taxon>
        <taxon>Enterobacteriaceae</taxon>
        <taxon>Escherichia</taxon>
    </lineage>
</organism>
<comment type="function">
    <text evidence="1">Involved in base excision repair of DNA damaged by oxidation or by mutagenic agents. Acts as a DNA glycosylase that recognizes and removes damaged bases. Has a preference for oxidized pyrimidines, such as thymine glycol, 5,6-dihydrouracil and 5,6-dihydrothymine. Has AP (apurinic/apyrimidinic) lyase activity and introduces nicks in the DNA strand. Cleaves the DNA backbone by beta-delta elimination to generate a single-strand break at the site of the removed base with both 3'- and 5'-phosphates.</text>
</comment>
<comment type="catalytic activity">
    <reaction evidence="1">
        <text>2'-deoxyribonucleotide-(2'-deoxyribose 5'-phosphate)-2'-deoxyribonucleotide-DNA = a 3'-end 2'-deoxyribonucleotide-(2,3-dehydro-2,3-deoxyribose 5'-phosphate)-DNA + a 5'-end 5'-phospho-2'-deoxyribonucleoside-DNA + H(+)</text>
        <dbReference type="Rhea" id="RHEA:66592"/>
        <dbReference type="Rhea" id="RHEA-COMP:13180"/>
        <dbReference type="Rhea" id="RHEA-COMP:16897"/>
        <dbReference type="Rhea" id="RHEA-COMP:17067"/>
        <dbReference type="ChEBI" id="CHEBI:15378"/>
        <dbReference type="ChEBI" id="CHEBI:136412"/>
        <dbReference type="ChEBI" id="CHEBI:157695"/>
        <dbReference type="ChEBI" id="CHEBI:167181"/>
        <dbReference type="EC" id="4.2.99.18"/>
    </reaction>
</comment>
<comment type="cofactor">
    <cofactor evidence="1">
        <name>Zn(2+)</name>
        <dbReference type="ChEBI" id="CHEBI:29105"/>
    </cofactor>
    <text evidence="1">Binds 1 zinc ion per subunit.</text>
</comment>
<comment type="similarity">
    <text evidence="1">Belongs to the FPG family.</text>
</comment>
<dbReference type="EC" id="3.2.2.-" evidence="1"/>
<dbReference type="EC" id="4.2.99.18" evidence="1"/>
<dbReference type="EMBL" id="CP000243">
    <property type="protein sequence ID" value="ABE06205.1"/>
    <property type="molecule type" value="Genomic_DNA"/>
</dbReference>
<dbReference type="RefSeq" id="WP_001114008.1">
    <property type="nucleotide sequence ID" value="NZ_CP064825.1"/>
</dbReference>
<dbReference type="SMR" id="Q1REK9"/>
<dbReference type="KEGG" id="eci:UTI89_C0712"/>
<dbReference type="HOGENOM" id="CLU_038423_2_2_6"/>
<dbReference type="Proteomes" id="UP000001952">
    <property type="component" value="Chromosome"/>
</dbReference>
<dbReference type="GO" id="GO:0140078">
    <property type="term" value="F:class I DNA-(apurinic or apyrimidinic site) endonuclease activity"/>
    <property type="evidence" value="ECO:0007669"/>
    <property type="project" value="UniProtKB-EC"/>
</dbReference>
<dbReference type="GO" id="GO:0003684">
    <property type="term" value="F:damaged DNA binding"/>
    <property type="evidence" value="ECO:0007669"/>
    <property type="project" value="InterPro"/>
</dbReference>
<dbReference type="GO" id="GO:0000703">
    <property type="term" value="F:oxidized pyrimidine nucleobase lesion DNA N-glycosylase activity"/>
    <property type="evidence" value="ECO:0007669"/>
    <property type="project" value="UniProtKB-UniRule"/>
</dbReference>
<dbReference type="GO" id="GO:0008270">
    <property type="term" value="F:zinc ion binding"/>
    <property type="evidence" value="ECO:0007669"/>
    <property type="project" value="UniProtKB-UniRule"/>
</dbReference>
<dbReference type="GO" id="GO:0006284">
    <property type="term" value="P:base-excision repair"/>
    <property type="evidence" value="ECO:0007669"/>
    <property type="project" value="InterPro"/>
</dbReference>
<dbReference type="CDD" id="cd08965">
    <property type="entry name" value="EcNei-like_N"/>
    <property type="match status" value="1"/>
</dbReference>
<dbReference type="FunFam" id="1.10.8.50:FF:000005">
    <property type="entry name" value="Endonuclease 8"/>
    <property type="match status" value="1"/>
</dbReference>
<dbReference type="FunFam" id="3.20.190.10:FF:000002">
    <property type="entry name" value="Endonuclease 8"/>
    <property type="match status" value="1"/>
</dbReference>
<dbReference type="Gene3D" id="1.10.8.50">
    <property type="match status" value="1"/>
</dbReference>
<dbReference type="Gene3D" id="3.20.190.10">
    <property type="entry name" value="MutM-like, N-terminal"/>
    <property type="match status" value="1"/>
</dbReference>
<dbReference type="HAMAP" id="MF_01253">
    <property type="entry name" value="Endonuclease_8"/>
    <property type="match status" value="1"/>
</dbReference>
<dbReference type="InterPro" id="IPR015886">
    <property type="entry name" value="DNA_glyclase/AP_lyase_DNA-bd"/>
</dbReference>
<dbReference type="InterPro" id="IPR015887">
    <property type="entry name" value="DNA_glyclase_Znf_dom_DNA_BS"/>
</dbReference>
<dbReference type="InterPro" id="IPR044091">
    <property type="entry name" value="EcNei-like_N"/>
</dbReference>
<dbReference type="InterPro" id="IPR023713">
    <property type="entry name" value="Endonuclease-VIII"/>
</dbReference>
<dbReference type="InterPro" id="IPR012319">
    <property type="entry name" value="FPG_cat"/>
</dbReference>
<dbReference type="InterPro" id="IPR035937">
    <property type="entry name" value="MutM-like_N-ter"/>
</dbReference>
<dbReference type="InterPro" id="IPR010979">
    <property type="entry name" value="Ribosomal_uS13-like_H2TH"/>
</dbReference>
<dbReference type="InterPro" id="IPR000214">
    <property type="entry name" value="Znf_DNA_glyclase/AP_lyase"/>
</dbReference>
<dbReference type="InterPro" id="IPR010663">
    <property type="entry name" value="Znf_FPG/IleRS"/>
</dbReference>
<dbReference type="NCBIfam" id="NF007763">
    <property type="entry name" value="PRK10445.1"/>
    <property type="match status" value="1"/>
</dbReference>
<dbReference type="PANTHER" id="PTHR42697">
    <property type="entry name" value="ENDONUCLEASE 8"/>
    <property type="match status" value="1"/>
</dbReference>
<dbReference type="PANTHER" id="PTHR42697:SF1">
    <property type="entry name" value="ENDONUCLEASE 8"/>
    <property type="match status" value="1"/>
</dbReference>
<dbReference type="Pfam" id="PF01149">
    <property type="entry name" value="Fapy_DNA_glyco"/>
    <property type="match status" value="1"/>
</dbReference>
<dbReference type="Pfam" id="PF06831">
    <property type="entry name" value="H2TH"/>
    <property type="match status" value="1"/>
</dbReference>
<dbReference type="Pfam" id="PF06827">
    <property type="entry name" value="zf-FPG_IleRS"/>
    <property type="match status" value="1"/>
</dbReference>
<dbReference type="SMART" id="SM00898">
    <property type="entry name" value="Fapy_DNA_glyco"/>
    <property type="match status" value="1"/>
</dbReference>
<dbReference type="SMART" id="SM01232">
    <property type="entry name" value="H2TH"/>
    <property type="match status" value="1"/>
</dbReference>
<dbReference type="SUPFAM" id="SSF57716">
    <property type="entry name" value="Glucocorticoid receptor-like (DNA-binding domain)"/>
    <property type="match status" value="1"/>
</dbReference>
<dbReference type="SUPFAM" id="SSF81624">
    <property type="entry name" value="N-terminal domain of MutM-like DNA repair proteins"/>
    <property type="match status" value="1"/>
</dbReference>
<dbReference type="SUPFAM" id="SSF46946">
    <property type="entry name" value="S13-like H2TH domain"/>
    <property type="match status" value="1"/>
</dbReference>
<dbReference type="PROSITE" id="PS51068">
    <property type="entry name" value="FPG_CAT"/>
    <property type="match status" value="1"/>
</dbReference>
<dbReference type="PROSITE" id="PS01242">
    <property type="entry name" value="ZF_FPG_1"/>
    <property type="match status" value="1"/>
</dbReference>
<dbReference type="PROSITE" id="PS51066">
    <property type="entry name" value="ZF_FPG_2"/>
    <property type="match status" value="1"/>
</dbReference>
<proteinExistence type="inferred from homology"/>
<keyword id="KW-0227">DNA damage</keyword>
<keyword id="KW-0234">DNA repair</keyword>
<keyword id="KW-0238">DNA-binding</keyword>
<keyword id="KW-0326">Glycosidase</keyword>
<keyword id="KW-0378">Hydrolase</keyword>
<keyword id="KW-0456">Lyase</keyword>
<keyword id="KW-0479">Metal-binding</keyword>
<keyword id="KW-0511">Multifunctional enzyme</keyword>
<keyword id="KW-0862">Zinc</keyword>
<keyword id="KW-0863">Zinc-finger</keyword>
<name>END8_ECOUT</name>
<feature type="initiator methionine" description="Removed" evidence="1">
    <location>
        <position position="1"/>
    </location>
</feature>
<feature type="chain" id="PRO_1000067203" description="Endonuclease 8">
    <location>
        <begin position="2"/>
        <end position="263"/>
    </location>
</feature>
<feature type="zinc finger region" description="FPG-type" evidence="1">
    <location>
        <begin position="229"/>
        <end position="263"/>
    </location>
</feature>
<feature type="active site" description="Schiff-base intermediate with DNA" evidence="1">
    <location>
        <position position="2"/>
    </location>
</feature>
<feature type="active site" description="Proton donor" evidence="1">
    <location>
        <position position="3"/>
    </location>
</feature>
<feature type="active site" description="Proton donor; for beta-elimination activity" evidence="1">
    <location>
        <position position="53"/>
    </location>
</feature>
<feature type="active site" description="Proton donor; for delta-elimination activity" evidence="1">
    <location>
        <position position="253"/>
    </location>
</feature>
<feature type="binding site" evidence="1">
    <location>
        <position position="70"/>
    </location>
    <ligand>
        <name>DNA</name>
        <dbReference type="ChEBI" id="CHEBI:16991"/>
    </ligand>
</feature>
<feature type="binding site" evidence="1">
    <location>
        <position position="125"/>
    </location>
    <ligand>
        <name>DNA</name>
        <dbReference type="ChEBI" id="CHEBI:16991"/>
    </ligand>
</feature>
<feature type="binding site" evidence="1">
    <location>
        <position position="169"/>
    </location>
    <ligand>
        <name>DNA</name>
        <dbReference type="ChEBI" id="CHEBI:16991"/>
    </ligand>
</feature>
<reference key="1">
    <citation type="journal article" date="2006" name="Proc. Natl. Acad. Sci. U.S.A.">
        <title>Identification of genes subject to positive selection in uropathogenic strains of Escherichia coli: a comparative genomics approach.</title>
        <authorList>
            <person name="Chen S.L."/>
            <person name="Hung C.-S."/>
            <person name="Xu J."/>
            <person name="Reigstad C.S."/>
            <person name="Magrini V."/>
            <person name="Sabo A."/>
            <person name="Blasiar D."/>
            <person name="Bieri T."/>
            <person name="Meyer R.R."/>
            <person name="Ozersky P."/>
            <person name="Armstrong J.R."/>
            <person name="Fulton R.S."/>
            <person name="Latreille J.P."/>
            <person name="Spieth J."/>
            <person name="Hooton T.M."/>
            <person name="Mardis E.R."/>
            <person name="Hultgren S.J."/>
            <person name="Gordon J.I."/>
        </authorList>
    </citation>
    <scope>NUCLEOTIDE SEQUENCE [LARGE SCALE GENOMIC DNA]</scope>
    <source>
        <strain>UTI89 / UPEC</strain>
    </source>
</reference>
<accession>Q1REK9</accession>
<sequence length="263" mass="29799">MPEGPEIRRAADNLEAAIKGKPLTDVWFAFPQLKSYQSRLIGQHVTHVETRGKALLTHFSNDLTLYSHNQLYGVWRVVDTGEEPQTTRVLRVKLQTADKTILLYSASDIEMLTPEQLTTHPFLQRVGPDVLDPNLTPEVVKERLLSPRFRNRQFAGLLLDQAFLAGLGNYLRVEILWQVGLTGNHKAKDLNAAQLDALAHALLDTPRLSYATRGQVDENKYHGALFRFKVFHRDGEPCERCGGIIEKTTLSSRPFYWCPGCQH</sequence>